<comment type="function">
    <text evidence="1">Involved in the binding of tRNA to the ribosomes.</text>
</comment>
<comment type="subunit">
    <text evidence="1">Part of the 30S ribosomal subunit.</text>
</comment>
<comment type="similarity">
    <text evidence="1">Belongs to the universal ribosomal protein uS10 family.</text>
</comment>
<evidence type="ECO:0000255" key="1">
    <source>
        <dbReference type="HAMAP-Rule" id="MF_00508"/>
    </source>
</evidence>
<evidence type="ECO:0000305" key="2"/>
<protein>
    <recommendedName>
        <fullName evidence="1">Small ribosomal subunit protein uS10</fullName>
    </recommendedName>
    <alternativeName>
        <fullName evidence="2">30S ribosomal protein S10</fullName>
    </alternativeName>
</protein>
<feature type="chain" id="PRO_1000127156" description="Small ribosomal subunit protein uS10">
    <location>
        <begin position="1"/>
        <end position="103"/>
    </location>
</feature>
<gene>
    <name evidence="1" type="primary">rpsJ</name>
    <name type="ordered locus">NGK_2432</name>
</gene>
<organism>
    <name type="scientific">Neisseria gonorrhoeae (strain NCCP11945)</name>
    <dbReference type="NCBI Taxonomy" id="521006"/>
    <lineage>
        <taxon>Bacteria</taxon>
        <taxon>Pseudomonadati</taxon>
        <taxon>Pseudomonadota</taxon>
        <taxon>Betaproteobacteria</taxon>
        <taxon>Neisseriales</taxon>
        <taxon>Neisseriaceae</taxon>
        <taxon>Neisseria</taxon>
    </lineage>
</organism>
<sequence>MANQKIRIRLKAYDYALIDRFAQEIVETAKRTGAVVKGPIPLPTKIERFNILRSPHMNKTSREQLEIRTHLRLMDIVDWTDKTTDALMKLDLPAGVDVEIKVQ</sequence>
<accession>B4RQX4</accession>
<dbReference type="EMBL" id="CP001050">
    <property type="protein sequence ID" value="ACF31033.1"/>
    <property type="molecule type" value="Genomic_DNA"/>
</dbReference>
<dbReference type="RefSeq" id="WP_012504051.1">
    <property type="nucleotide sequence ID" value="NC_011035.1"/>
</dbReference>
<dbReference type="SMR" id="B4RQX4"/>
<dbReference type="KEGG" id="ngk:NGK_2432"/>
<dbReference type="HOGENOM" id="CLU_122625_1_3_4"/>
<dbReference type="Proteomes" id="UP000002564">
    <property type="component" value="Chromosome"/>
</dbReference>
<dbReference type="GO" id="GO:1990904">
    <property type="term" value="C:ribonucleoprotein complex"/>
    <property type="evidence" value="ECO:0007669"/>
    <property type="project" value="UniProtKB-KW"/>
</dbReference>
<dbReference type="GO" id="GO:0005840">
    <property type="term" value="C:ribosome"/>
    <property type="evidence" value="ECO:0007669"/>
    <property type="project" value="UniProtKB-KW"/>
</dbReference>
<dbReference type="GO" id="GO:0003735">
    <property type="term" value="F:structural constituent of ribosome"/>
    <property type="evidence" value="ECO:0007669"/>
    <property type="project" value="InterPro"/>
</dbReference>
<dbReference type="GO" id="GO:0000049">
    <property type="term" value="F:tRNA binding"/>
    <property type="evidence" value="ECO:0007669"/>
    <property type="project" value="UniProtKB-UniRule"/>
</dbReference>
<dbReference type="GO" id="GO:0006412">
    <property type="term" value="P:translation"/>
    <property type="evidence" value="ECO:0007669"/>
    <property type="project" value="UniProtKB-UniRule"/>
</dbReference>
<dbReference type="FunFam" id="3.30.70.600:FF:000001">
    <property type="entry name" value="30S ribosomal protein S10"/>
    <property type="match status" value="1"/>
</dbReference>
<dbReference type="Gene3D" id="3.30.70.600">
    <property type="entry name" value="Ribosomal protein S10 domain"/>
    <property type="match status" value="1"/>
</dbReference>
<dbReference type="HAMAP" id="MF_00508">
    <property type="entry name" value="Ribosomal_uS10"/>
    <property type="match status" value="1"/>
</dbReference>
<dbReference type="InterPro" id="IPR001848">
    <property type="entry name" value="Ribosomal_uS10"/>
</dbReference>
<dbReference type="InterPro" id="IPR018268">
    <property type="entry name" value="Ribosomal_uS10_CS"/>
</dbReference>
<dbReference type="InterPro" id="IPR027486">
    <property type="entry name" value="Ribosomal_uS10_dom"/>
</dbReference>
<dbReference type="InterPro" id="IPR036838">
    <property type="entry name" value="Ribosomal_uS10_dom_sf"/>
</dbReference>
<dbReference type="NCBIfam" id="NF001861">
    <property type="entry name" value="PRK00596.1"/>
    <property type="match status" value="1"/>
</dbReference>
<dbReference type="NCBIfam" id="TIGR01049">
    <property type="entry name" value="rpsJ_bact"/>
    <property type="match status" value="1"/>
</dbReference>
<dbReference type="PANTHER" id="PTHR11700">
    <property type="entry name" value="30S RIBOSOMAL PROTEIN S10 FAMILY MEMBER"/>
    <property type="match status" value="1"/>
</dbReference>
<dbReference type="Pfam" id="PF00338">
    <property type="entry name" value="Ribosomal_S10"/>
    <property type="match status" value="1"/>
</dbReference>
<dbReference type="PRINTS" id="PR00971">
    <property type="entry name" value="RIBOSOMALS10"/>
</dbReference>
<dbReference type="SMART" id="SM01403">
    <property type="entry name" value="Ribosomal_S10"/>
    <property type="match status" value="1"/>
</dbReference>
<dbReference type="SUPFAM" id="SSF54999">
    <property type="entry name" value="Ribosomal protein S10"/>
    <property type="match status" value="1"/>
</dbReference>
<dbReference type="PROSITE" id="PS00361">
    <property type="entry name" value="RIBOSOMAL_S10"/>
    <property type="match status" value="1"/>
</dbReference>
<proteinExistence type="inferred from homology"/>
<reference key="1">
    <citation type="journal article" date="2008" name="J. Bacteriol.">
        <title>Complete genome sequence of Neisseria gonorrhoeae NCCP11945.</title>
        <authorList>
            <person name="Chung G.T."/>
            <person name="Yoo J.S."/>
            <person name="Oh H.B."/>
            <person name="Lee Y.S."/>
            <person name="Cha S.H."/>
            <person name="Kim S.J."/>
            <person name="Yoo C.K."/>
        </authorList>
    </citation>
    <scope>NUCLEOTIDE SEQUENCE [LARGE SCALE GENOMIC DNA]</scope>
    <source>
        <strain>NCCP11945</strain>
    </source>
</reference>
<name>RS10_NEIG2</name>
<keyword id="KW-0687">Ribonucleoprotein</keyword>
<keyword id="KW-0689">Ribosomal protein</keyword>